<reference key="1">
    <citation type="journal article" date="1997" name="Nature">
        <title>The complete genome sequence of the hyperthermophilic, sulphate-reducing archaeon Archaeoglobus fulgidus.</title>
        <authorList>
            <person name="Klenk H.-P."/>
            <person name="Clayton R.A."/>
            <person name="Tomb J.-F."/>
            <person name="White O."/>
            <person name="Nelson K.E."/>
            <person name="Ketchum K.A."/>
            <person name="Dodson R.J."/>
            <person name="Gwinn M.L."/>
            <person name="Hickey E.K."/>
            <person name="Peterson J.D."/>
            <person name="Richardson D.L."/>
            <person name="Kerlavage A.R."/>
            <person name="Graham D.E."/>
            <person name="Kyrpides N.C."/>
            <person name="Fleischmann R.D."/>
            <person name="Quackenbush J."/>
            <person name="Lee N.H."/>
            <person name="Sutton G.G."/>
            <person name="Gill S.R."/>
            <person name="Kirkness E.F."/>
            <person name="Dougherty B.A."/>
            <person name="McKenney K."/>
            <person name="Adams M.D."/>
            <person name="Loftus B.J."/>
            <person name="Peterson S.N."/>
            <person name="Reich C.I."/>
            <person name="McNeil L.K."/>
            <person name="Badger J.H."/>
            <person name="Glodek A."/>
            <person name="Zhou L."/>
            <person name="Overbeek R."/>
            <person name="Gocayne J.D."/>
            <person name="Weidman J.F."/>
            <person name="McDonald L.A."/>
            <person name="Utterback T.R."/>
            <person name="Cotton M.D."/>
            <person name="Spriggs T."/>
            <person name="Artiach P."/>
            <person name="Kaine B.P."/>
            <person name="Sykes S.M."/>
            <person name="Sadow P.W."/>
            <person name="D'Andrea K.P."/>
            <person name="Bowman C."/>
            <person name="Fujii C."/>
            <person name="Garland S.A."/>
            <person name="Mason T.M."/>
            <person name="Olsen G.J."/>
            <person name="Fraser C.M."/>
            <person name="Smith H.O."/>
            <person name="Woese C.R."/>
            <person name="Venter J.C."/>
        </authorList>
    </citation>
    <scope>NUCLEOTIDE SEQUENCE [LARGE SCALE GENOMIC DNA]</scope>
    <source>
        <strain>ATCC 49558 / DSM 4304 / JCM 9628 / NBRC 100126 / VC-16</strain>
    </source>
</reference>
<proteinExistence type="predicted"/>
<dbReference type="EMBL" id="AE000782">
    <property type="protein sequence ID" value="AAB90658.1"/>
    <property type="molecule type" value="Genomic_DNA"/>
</dbReference>
<dbReference type="PIR" id="B69323">
    <property type="entry name" value="B69323"/>
</dbReference>
<dbReference type="RefSeq" id="WP_010878090.1">
    <property type="nucleotide sequence ID" value="NC_000917.1"/>
</dbReference>
<dbReference type="SMR" id="O29669"/>
<dbReference type="STRING" id="224325.AF_0586"/>
<dbReference type="PaxDb" id="224325-AF_0586"/>
<dbReference type="EnsemblBacteria" id="AAB90658">
    <property type="protein sequence ID" value="AAB90658"/>
    <property type="gene ID" value="AF_0586"/>
</dbReference>
<dbReference type="KEGG" id="afu:AF_0586"/>
<dbReference type="HOGENOM" id="CLU_1830485_0_0_2"/>
<dbReference type="Proteomes" id="UP000002199">
    <property type="component" value="Chromosome"/>
</dbReference>
<protein>
    <recommendedName>
        <fullName>Uncharacterized protein AF_0586</fullName>
    </recommendedName>
</protein>
<name>Y586_ARCFU</name>
<organism>
    <name type="scientific">Archaeoglobus fulgidus (strain ATCC 49558 / DSM 4304 / JCM 9628 / NBRC 100126 / VC-16)</name>
    <dbReference type="NCBI Taxonomy" id="224325"/>
    <lineage>
        <taxon>Archaea</taxon>
        <taxon>Methanobacteriati</taxon>
        <taxon>Methanobacteriota</taxon>
        <taxon>Archaeoglobi</taxon>
        <taxon>Archaeoglobales</taxon>
        <taxon>Archaeoglobaceae</taxon>
        <taxon>Archaeoglobus</taxon>
    </lineage>
</organism>
<gene>
    <name type="ordered locus">AF_0586</name>
</gene>
<sequence>MRGEKLTKKWRLIKLSRMHYSDFAVRFIEEMLEDNERLHDFSVKYGMEKGAEVKRNLHLKDFSDVAEFLSMITGVRVSEKEGGVVFDGCPSREMTEVRKTVICTGFLEGFFKVFGYDVEVNAACGEKCRVEVKKRTSSSR</sequence>
<keyword id="KW-1185">Reference proteome</keyword>
<feature type="chain" id="PRO_0000127892" description="Uncharacterized protein AF_0586">
    <location>
        <begin position="1"/>
        <end position="140"/>
    </location>
</feature>
<accession>O29669</accession>